<protein>
    <recommendedName>
        <fullName>Beta-toxin Cll1m</fullName>
    </recommendedName>
    <alternativeName>
        <fullName>Neurotoxin 1</fullName>
    </alternativeName>
    <alternativeName>
        <fullName>Toxin II.8.4.3</fullName>
    </alternativeName>
</protein>
<proteinExistence type="evidence at protein level"/>
<name>SCX1M_CENLI</name>
<keyword id="KW-0027">Amidation</keyword>
<keyword id="KW-0903">Direct protein sequencing</keyword>
<keyword id="KW-1015">Disulfide bond</keyword>
<keyword id="KW-0872">Ion channel impairing toxin</keyword>
<keyword id="KW-0528">Neurotoxin</keyword>
<keyword id="KW-0964">Secreted</keyword>
<keyword id="KW-0800">Toxin</keyword>
<keyword id="KW-0738">Voltage-gated sodium channel impairing toxin</keyword>
<dbReference type="SMR" id="P45666"/>
<dbReference type="GO" id="GO:0005576">
    <property type="term" value="C:extracellular region"/>
    <property type="evidence" value="ECO:0007669"/>
    <property type="project" value="UniProtKB-SubCell"/>
</dbReference>
<dbReference type="GO" id="GO:0019871">
    <property type="term" value="F:sodium channel inhibitor activity"/>
    <property type="evidence" value="ECO:0007669"/>
    <property type="project" value="InterPro"/>
</dbReference>
<dbReference type="GO" id="GO:0090729">
    <property type="term" value="F:toxin activity"/>
    <property type="evidence" value="ECO:0007669"/>
    <property type="project" value="UniProtKB-KW"/>
</dbReference>
<dbReference type="GO" id="GO:0006952">
    <property type="term" value="P:defense response"/>
    <property type="evidence" value="ECO:0007669"/>
    <property type="project" value="InterPro"/>
</dbReference>
<dbReference type="CDD" id="cd23106">
    <property type="entry name" value="neurotoxins_LC_scorpion"/>
    <property type="match status" value="1"/>
</dbReference>
<dbReference type="FunFam" id="3.30.30.10:FF:000002">
    <property type="entry name" value="Alpha-like toxin BmK-M1"/>
    <property type="match status" value="1"/>
</dbReference>
<dbReference type="Gene3D" id="3.30.30.10">
    <property type="entry name" value="Knottin, scorpion toxin-like"/>
    <property type="match status" value="1"/>
</dbReference>
<dbReference type="InterPro" id="IPR044062">
    <property type="entry name" value="LCN-type_CS_alpha_beta_dom"/>
</dbReference>
<dbReference type="InterPro" id="IPR003614">
    <property type="entry name" value="Scorpion_toxin-like"/>
</dbReference>
<dbReference type="InterPro" id="IPR036574">
    <property type="entry name" value="Scorpion_toxin-like_sf"/>
</dbReference>
<dbReference type="InterPro" id="IPR018218">
    <property type="entry name" value="Scorpion_toxinL"/>
</dbReference>
<dbReference type="PRINTS" id="PR00285">
    <property type="entry name" value="SCORPNTOXIN"/>
</dbReference>
<dbReference type="SMART" id="SM00505">
    <property type="entry name" value="Knot1"/>
    <property type="match status" value="1"/>
</dbReference>
<dbReference type="SUPFAM" id="SSF57095">
    <property type="entry name" value="Scorpion toxin-like"/>
    <property type="match status" value="1"/>
</dbReference>
<dbReference type="PROSITE" id="PS51863">
    <property type="entry name" value="LCN_CSAB"/>
    <property type="match status" value="1"/>
</dbReference>
<sequence length="66" mass="7550">KEGYIVNLSTGCKYECYKLGDNDYCLRECKQQYGKGAGGYCYAFGCWCTHLYEQAVVWPLPKKTCT</sequence>
<comment type="function">
    <text>Beta toxins bind voltage-independently at site-4 of sodium channels (Nav) and shift the voltage of activation toward more negative potentials thereby affecting sodium channel activation and promoting spontaneous and repetitive firing.</text>
</comment>
<comment type="subcellular location">
    <subcellularLocation>
        <location>Secreted</location>
    </subcellularLocation>
</comment>
<comment type="tissue specificity">
    <text>Expressed by the venom gland.</text>
</comment>
<comment type="domain">
    <text evidence="3">Has the structural arrangement of an alpha-helix connected to antiparallel beta-sheets by disulfide bonds (CS-alpha/beta).</text>
</comment>
<comment type="similarity">
    <text evidence="3">Belongs to the long (4 C-C) scorpion toxin superfamily. Sodium channel inhibitor family. Beta subfamily.</text>
</comment>
<accession>P45666</accession>
<organism>
    <name type="scientific">Centruroides limpidus</name>
    <name type="common">Mexican scorpion</name>
    <dbReference type="NCBI Taxonomy" id="6876"/>
    <lineage>
        <taxon>Eukaryota</taxon>
        <taxon>Metazoa</taxon>
        <taxon>Ecdysozoa</taxon>
        <taxon>Arthropoda</taxon>
        <taxon>Chelicerata</taxon>
        <taxon>Arachnida</taxon>
        <taxon>Scorpiones</taxon>
        <taxon>Buthida</taxon>
        <taxon>Buthoidea</taxon>
        <taxon>Buthidae</taxon>
        <taxon>Centruroides</taxon>
    </lineage>
</organism>
<feature type="chain" id="PRO_0000066762" description="Beta-toxin Cll1m">
    <location>
        <begin position="1"/>
        <end position="66"/>
    </location>
</feature>
<feature type="domain" description="LCN-type CS-alpha/beta" evidence="2">
    <location>
        <begin position="1"/>
        <end position="66"/>
    </location>
</feature>
<feature type="modified residue" description="Threonine amide" evidence="1">
    <location>
        <position position="66"/>
    </location>
</feature>
<feature type="disulfide bond" evidence="2">
    <location>
        <begin position="12"/>
        <end position="65"/>
    </location>
</feature>
<feature type="disulfide bond" evidence="2">
    <location>
        <begin position="16"/>
        <end position="41"/>
    </location>
</feature>
<feature type="disulfide bond" evidence="2">
    <location>
        <begin position="25"/>
        <end position="46"/>
    </location>
</feature>
<feature type="disulfide bond" evidence="2">
    <location>
        <begin position="29"/>
        <end position="48"/>
    </location>
</feature>
<evidence type="ECO:0000250" key="1"/>
<evidence type="ECO:0000255" key="2">
    <source>
        <dbReference type="PROSITE-ProRule" id="PRU01210"/>
    </source>
</evidence>
<evidence type="ECO:0000305" key="3"/>
<reference key="1">
    <citation type="journal article" date="1994" name="Toxicon">
        <title>Isolation and characterization of a novel toxin from the venom of the scorpion Centruroides limpidus limpidus Karsch.</title>
        <authorList>
            <person name="Ramirez A.N."/>
            <person name="Martin B.M."/>
            <person name="Gurrola G.B."/>
            <person name="Possani L.D."/>
        </authorList>
    </citation>
    <scope>PROTEIN SEQUENCE</scope>
    <source>
        <tissue>Venom</tissue>
    </source>
</reference>